<name>NTCP7_MOUSE</name>
<comment type="function">
    <text evidence="1 4">Involved in teeth and skeletal development. Has an essential role in the biosynthesis and trafficking of glycosaminoglycans and glycoproteins to produce a proper functioning extracellular matrix. Required for extracellular matrix mineralization (PubMed:30082715). Also involved in the regulation of cellular calcium homeostasis (By similarity). Does not show transport activity towards bile acids or steroid sulfates (including taurocholate, cholate, chenodeoxycholate, estrone-3-sulfate, dehydroepiandrosterone sulfate (DHEAS) and pregnenolone sulfate).</text>
</comment>
<comment type="subcellular location">
    <subcellularLocation>
        <location evidence="1">Cell membrane</location>
        <topology evidence="1">Multi-pass membrane protein</topology>
    </subcellularLocation>
    <subcellularLocation>
        <location evidence="1">Endoplasmic reticulum membrane</location>
        <topology evidence="1">Multi-pass membrane protein</topology>
    </subcellularLocation>
    <subcellularLocation>
        <location evidence="1">Golgi apparatus membrane</location>
    </subcellularLocation>
</comment>
<comment type="alternative products">
    <event type="alternative splicing"/>
    <isoform>
        <id>Q5PT53-1</id>
        <name>1</name>
        <sequence type="displayed"/>
    </isoform>
    <isoform>
        <id>Q5PT53-2</id>
        <name>2</name>
        <sequence type="described" ref="VSP_023226"/>
    </isoform>
    <isoform>
        <id>Q5PT53-3</id>
        <name>3</name>
        <sequence type="described" ref="VSP_023225"/>
    </isoform>
</comment>
<comment type="tissue specificity">
    <text evidence="3 4">Expressed in heart, brain, colon, lung, liver, adrenal gland, stomach and ovary. Also expressed weakly in small intestine. Expressed in skeletal tissues (PubMed:30082715).</text>
</comment>
<comment type="developmental stage">
    <text evidence="4 5">Embryos at gestational age 12.5 dpc show the weakest SLC10A7 expression, mainly in the heart trabeculae of the developing heart and the cartilage of the vertebrae. From 14.5 dpc onwards, expression becomes more ubiquitous, with the strongest level observed at 16.5 dpc and postnatal day P0. At 14.5 dpc, it is strongly expressed in cartilaginous structures in the mandible, in the epithelial compartment of cap stage teeth, in the digits, in the spine and in the lung. At 16.5 dpc, transcripts are mostly localized in the inner dental epithelium and in the epithelial loop of bell stage teeth. At 18.5 dpc expression is observed in the inner dental epithelium of incisors, and in ameloblasts and odontoblasts of molars. At postnatal day P0 there is strong expression in the papillary layer of the oral mucous membrane underneath the palate, as well as in the ameloblast layer of emerging teeth. At postnatal day P10, it is localized to the growth plate of several long bones, such as the forefoot digits, the hindfoot tarsals and the humerus, and expression is more intense in the chondrocytes of the hypertrophic zone.</text>
</comment>
<comment type="disruption phenotype">
    <text evidence="4">Knockout mice present with skeletal dysplasia including growth retardation at birth and at 8 weeks, alteration of long-bone morphology, craniofacial anomalies and advanced tarsal maturation at birth, associated with enamel defects. The proportion of heparan sulfate (HS) in cartilage of knockout mice is significantly reduced compared with wild-type animals. SLC10A7 deficiency has no impact on skeletal muscle heparan sulfate levels.</text>
</comment>
<comment type="similarity">
    <text evidence="8">Belongs to the bile acid:sodium symporter (BASS) (TC 2.A.28) family.</text>
</comment>
<comment type="sequence caution" evidence="8">
    <conflict type="erroneous termination">
        <sequence resource="EMBL-CDS" id="BAC30613"/>
    </conflict>
    <text>Truncated C-terminus.</text>
</comment>
<proteinExistence type="evidence at transcript level"/>
<sequence length="340" mass="37256">MRLLERARKEWFMVGIVVAIGAAKLEPSVGVNGGPLKPEITVSYIAVATIFFNSGLSLKTEELTSALVHLRLHLFIQIFTLAFFPAAIWLFLQLLSVTSINEWLLKGLQTVGCMPPPVSSAVILTKAVGGNEAAAIFNSAFGSFLGIVVTPVLLLLFLGSSSSVPFTSIFSQLFMTVVVPLVIGQIVRRYIKDWLERKKPPFGVVSSSVLLMIIYTTFCDTFSNPNIDLDKFSLILILFIIVSVQLSFMLLTFIFSTRNNSGFTPADTVAIIFCSTHKSLTLGIPMLKIVFAGHEHLSLISVPLLIYHPAQILLGSVLVPTIKSWMVSRQKGVKLTRPTV</sequence>
<gene>
    <name type="primary">Slc10a7</name>
    <name type="synonym">P7</name>
</gene>
<keyword id="KW-0025">Alternative splicing</keyword>
<keyword id="KW-1003">Cell membrane</keyword>
<keyword id="KW-0256">Endoplasmic reticulum</keyword>
<keyword id="KW-0333">Golgi apparatus</keyword>
<keyword id="KW-0406">Ion transport</keyword>
<keyword id="KW-0472">Membrane</keyword>
<keyword id="KW-1185">Reference proteome</keyword>
<keyword id="KW-0915">Sodium</keyword>
<keyword id="KW-0739">Sodium transport</keyword>
<keyword id="KW-0769">Symport</keyword>
<keyword id="KW-0812">Transmembrane</keyword>
<keyword id="KW-1133">Transmembrane helix</keyword>
<keyword id="KW-0813">Transport</keyword>
<protein>
    <recommendedName>
        <fullName>Sodium/bile acid cotransporter 7</fullName>
    </recommendedName>
    <alternativeName>
        <fullName>Na(+)/bile acid cotransporter 7</fullName>
    </alternativeName>
    <alternativeName>
        <fullName>Solute carrier family 10 member 7</fullName>
    </alternativeName>
</protein>
<organism>
    <name type="scientific">Mus musculus</name>
    <name type="common">Mouse</name>
    <dbReference type="NCBI Taxonomy" id="10090"/>
    <lineage>
        <taxon>Eukaryota</taxon>
        <taxon>Metazoa</taxon>
        <taxon>Chordata</taxon>
        <taxon>Craniata</taxon>
        <taxon>Vertebrata</taxon>
        <taxon>Euteleostomi</taxon>
        <taxon>Mammalia</taxon>
        <taxon>Eutheria</taxon>
        <taxon>Euarchontoglires</taxon>
        <taxon>Glires</taxon>
        <taxon>Rodentia</taxon>
        <taxon>Myomorpha</taxon>
        <taxon>Muroidea</taxon>
        <taxon>Muridae</taxon>
        <taxon>Murinae</taxon>
        <taxon>Mus</taxon>
        <taxon>Mus</taxon>
    </lineage>
</organism>
<evidence type="ECO:0000250" key="1">
    <source>
        <dbReference type="UniProtKB" id="Q0GE19"/>
    </source>
</evidence>
<evidence type="ECO:0000255" key="2"/>
<evidence type="ECO:0000269" key="3">
    <source>
    </source>
</evidence>
<evidence type="ECO:0000269" key="4">
    <source>
    </source>
</evidence>
<evidence type="ECO:0000269" key="5">
    <source>
    </source>
</evidence>
<evidence type="ECO:0000303" key="6">
    <source>
    </source>
</evidence>
<evidence type="ECO:0000303" key="7">
    <source>
    </source>
</evidence>
<evidence type="ECO:0000305" key="8"/>
<accession>Q5PT53</accession>
<accession>Q5PT51</accession>
<accession>Q8BV58</accession>
<accession>Q8BYD0</accession>
<accession>Q9CWD6</accession>
<reference key="1">
    <citation type="journal article" date="2007" name="Eur. J. Cell Biol.">
        <title>Molecular and phylogenetic characterization of a novel putative membrane transporter (SLC10A7), conserved in vertebrates and bacteria.</title>
        <authorList>
            <person name="Godoy J.R."/>
            <person name="Fernandes C."/>
            <person name="Doering B."/>
            <person name="Beuerlein K."/>
            <person name="Petzinger E."/>
            <person name="Geyer J."/>
        </authorList>
    </citation>
    <scope>NUCLEOTIDE SEQUENCE [MRNA] (ISOFORMS 1 AND 3)</scope>
    <scope>TISSUE SPECIFICITY</scope>
    <source>
        <strain>C57BL/6J</strain>
        <tissue>Liver</tissue>
    </source>
</reference>
<reference key="2">
    <citation type="journal article" date="2005" name="Science">
        <title>The transcriptional landscape of the mammalian genome.</title>
        <authorList>
            <person name="Carninci P."/>
            <person name="Kasukawa T."/>
            <person name="Katayama S."/>
            <person name="Gough J."/>
            <person name="Frith M.C."/>
            <person name="Maeda N."/>
            <person name="Oyama R."/>
            <person name="Ravasi T."/>
            <person name="Lenhard B."/>
            <person name="Wells C."/>
            <person name="Kodzius R."/>
            <person name="Shimokawa K."/>
            <person name="Bajic V.B."/>
            <person name="Brenner S.E."/>
            <person name="Batalov S."/>
            <person name="Forrest A.R."/>
            <person name="Zavolan M."/>
            <person name="Davis M.J."/>
            <person name="Wilming L.G."/>
            <person name="Aidinis V."/>
            <person name="Allen J.E."/>
            <person name="Ambesi-Impiombato A."/>
            <person name="Apweiler R."/>
            <person name="Aturaliya R.N."/>
            <person name="Bailey T.L."/>
            <person name="Bansal M."/>
            <person name="Baxter L."/>
            <person name="Beisel K.W."/>
            <person name="Bersano T."/>
            <person name="Bono H."/>
            <person name="Chalk A.M."/>
            <person name="Chiu K.P."/>
            <person name="Choudhary V."/>
            <person name="Christoffels A."/>
            <person name="Clutterbuck D.R."/>
            <person name="Crowe M.L."/>
            <person name="Dalla E."/>
            <person name="Dalrymple B.P."/>
            <person name="de Bono B."/>
            <person name="Della Gatta G."/>
            <person name="di Bernardo D."/>
            <person name="Down T."/>
            <person name="Engstrom P."/>
            <person name="Fagiolini M."/>
            <person name="Faulkner G."/>
            <person name="Fletcher C.F."/>
            <person name="Fukushima T."/>
            <person name="Furuno M."/>
            <person name="Futaki S."/>
            <person name="Gariboldi M."/>
            <person name="Georgii-Hemming P."/>
            <person name="Gingeras T.R."/>
            <person name="Gojobori T."/>
            <person name="Green R.E."/>
            <person name="Gustincich S."/>
            <person name="Harbers M."/>
            <person name="Hayashi Y."/>
            <person name="Hensch T.K."/>
            <person name="Hirokawa N."/>
            <person name="Hill D."/>
            <person name="Huminiecki L."/>
            <person name="Iacono M."/>
            <person name="Ikeo K."/>
            <person name="Iwama A."/>
            <person name="Ishikawa T."/>
            <person name="Jakt M."/>
            <person name="Kanapin A."/>
            <person name="Katoh M."/>
            <person name="Kawasawa Y."/>
            <person name="Kelso J."/>
            <person name="Kitamura H."/>
            <person name="Kitano H."/>
            <person name="Kollias G."/>
            <person name="Krishnan S.P."/>
            <person name="Kruger A."/>
            <person name="Kummerfeld S.K."/>
            <person name="Kurochkin I.V."/>
            <person name="Lareau L.F."/>
            <person name="Lazarevic D."/>
            <person name="Lipovich L."/>
            <person name="Liu J."/>
            <person name="Liuni S."/>
            <person name="McWilliam S."/>
            <person name="Madan Babu M."/>
            <person name="Madera M."/>
            <person name="Marchionni L."/>
            <person name="Matsuda H."/>
            <person name="Matsuzawa S."/>
            <person name="Miki H."/>
            <person name="Mignone F."/>
            <person name="Miyake S."/>
            <person name="Morris K."/>
            <person name="Mottagui-Tabar S."/>
            <person name="Mulder N."/>
            <person name="Nakano N."/>
            <person name="Nakauchi H."/>
            <person name="Ng P."/>
            <person name="Nilsson R."/>
            <person name="Nishiguchi S."/>
            <person name="Nishikawa S."/>
            <person name="Nori F."/>
            <person name="Ohara O."/>
            <person name="Okazaki Y."/>
            <person name="Orlando V."/>
            <person name="Pang K.C."/>
            <person name="Pavan W.J."/>
            <person name="Pavesi G."/>
            <person name="Pesole G."/>
            <person name="Petrovsky N."/>
            <person name="Piazza S."/>
            <person name="Reed J."/>
            <person name="Reid J.F."/>
            <person name="Ring B.Z."/>
            <person name="Ringwald M."/>
            <person name="Rost B."/>
            <person name="Ruan Y."/>
            <person name="Salzberg S.L."/>
            <person name="Sandelin A."/>
            <person name="Schneider C."/>
            <person name="Schoenbach C."/>
            <person name="Sekiguchi K."/>
            <person name="Semple C.A."/>
            <person name="Seno S."/>
            <person name="Sessa L."/>
            <person name="Sheng Y."/>
            <person name="Shibata Y."/>
            <person name="Shimada H."/>
            <person name="Shimada K."/>
            <person name="Silva D."/>
            <person name="Sinclair B."/>
            <person name="Sperling S."/>
            <person name="Stupka E."/>
            <person name="Sugiura K."/>
            <person name="Sultana R."/>
            <person name="Takenaka Y."/>
            <person name="Taki K."/>
            <person name="Tammoja K."/>
            <person name="Tan S.L."/>
            <person name="Tang S."/>
            <person name="Taylor M.S."/>
            <person name="Tegner J."/>
            <person name="Teichmann S.A."/>
            <person name="Ueda H.R."/>
            <person name="van Nimwegen E."/>
            <person name="Verardo R."/>
            <person name="Wei C.L."/>
            <person name="Yagi K."/>
            <person name="Yamanishi H."/>
            <person name="Zabarovsky E."/>
            <person name="Zhu S."/>
            <person name="Zimmer A."/>
            <person name="Hide W."/>
            <person name="Bult C."/>
            <person name="Grimmond S.M."/>
            <person name="Teasdale R.D."/>
            <person name="Liu E.T."/>
            <person name="Brusic V."/>
            <person name="Quackenbush J."/>
            <person name="Wahlestedt C."/>
            <person name="Mattick J.S."/>
            <person name="Hume D.A."/>
            <person name="Kai C."/>
            <person name="Sasaki D."/>
            <person name="Tomaru Y."/>
            <person name="Fukuda S."/>
            <person name="Kanamori-Katayama M."/>
            <person name="Suzuki M."/>
            <person name="Aoki J."/>
            <person name="Arakawa T."/>
            <person name="Iida J."/>
            <person name="Imamura K."/>
            <person name="Itoh M."/>
            <person name="Kato T."/>
            <person name="Kawaji H."/>
            <person name="Kawagashira N."/>
            <person name="Kawashima T."/>
            <person name="Kojima M."/>
            <person name="Kondo S."/>
            <person name="Konno H."/>
            <person name="Nakano K."/>
            <person name="Ninomiya N."/>
            <person name="Nishio T."/>
            <person name="Okada M."/>
            <person name="Plessy C."/>
            <person name="Shibata K."/>
            <person name="Shiraki T."/>
            <person name="Suzuki S."/>
            <person name="Tagami M."/>
            <person name="Waki K."/>
            <person name="Watahiki A."/>
            <person name="Okamura-Oho Y."/>
            <person name="Suzuki H."/>
            <person name="Kawai J."/>
            <person name="Hayashizaki Y."/>
        </authorList>
    </citation>
    <scope>NUCLEOTIDE SEQUENCE [LARGE SCALE MRNA] (ISOFORMS 1 AND 2)</scope>
    <source>
        <strain>C57BL/6J</strain>
        <tissue>Bone marrow</tissue>
        <tissue>Thymus</tissue>
    </source>
</reference>
<reference key="3">
    <citation type="journal article" date="2004" name="Genome Res.">
        <title>The status, quality, and expansion of the NIH full-length cDNA project: the Mammalian Gene Collection (MGC).</title>
        <authorList>
            <consortium name="The MGC Project Team"/>
        </authorList>
    </citation>
    <scope>NUCLEOTIDE SEQUENCE [LARGE SCALE MRNA] (ISOFORM 1)</scope>
</reference>
<reference key="4">
    <citation type="journal article" date="2018" name="Nat. Commun.">
        <title>SLC10A7 mutations cause a skeletal dysplasia with amelogenesis imperfecta mediated by GAG biosynthesis defects.</title>
        <authorList>
            <person name="Dubail J."/>
            <person name="Huber C."/>
            <person name="Chantepie S."/>
            <person name="Sonntag S."/>
            <person name="Tueysuez B."/>
            <person name="Mihci E."/>
            <person name="Gordon C.T."/>
            <person name="Steichen-Gersdorf E."/>
            <person name="Amiel J."/>
            <person name="Nur B."/>
            <person name="Stolte-Dijkstra I."/>
            <person name="van Eerde A.M."/>
            <person name="van Gassen K.L."/>
            <person name="Breugem C.C."/>
            <person name="Stegmann A."/>
            <person name="Lekszas C."/>
            <person name="Maroofian R."/>
            <person name="Karimiani E.G."/>
            <person name="Bruneel A."/>
            <person name="Seta N."/>
            <person name="Munnich A."/>
            <person name="Papy-Garcia D."/>
            <person name="De La Dure-Molla M."/>
            <person name="Cormier-Daire V."/>
        </authorList>
    </citation>
    <scope>FUNCTION</scope>
    <scope>TISSUE SPECIFICITY</scope>
    <scope>DEVELOPMENTAL STAGE</scope>
    <scope>DISRUPTION PHENOTYPE</scope>
</reference>
<reference key="5">
    <citation type="journal article" date="2019" name="Front. Genet.">
        <title>A new SLC10A7 homozygous missense mutation responsible for a milder phenotype of skeletal dysplasia with amelogenesis imperfecta.</title>
        <authorList>
            <person name="Laugel-Haushalter V."/>
            <person name="Baer S."/>
            <person name="Schaefer E."/>
            <person name="Stoetzel C."/>
            <person name="Geoffroy V."/>
            <person name="Alembik Y."/>
            <person name="Kharouf N."/>
            <person name="Huckert M."/>
            <person name="Hamm P."/>
            <person name="Hemmerle J."/>
            <person name="Maniere M.C."/>
            <person name="Friant S."/>
            <person name="Dollfus H."/>
            <person name="Bloch-Zupan A."/>
        </authorList>
    </citation>
    <scope>DEVELOPMENTAL STAGE</scope>
</reference>
<feature type="chain" id="PRO_0000278251" description="Sodium/bile acid cotransporter 7">
    <location>
        <begin position="1"/>
        <end position="340"/>
    </location>
</feature>
<feature type="topological domain" description="Cytoplasmic" evidence="1">
    <location>
        <begin position="1"/>
        <end position="10"/>
    </location>
</feature>
<feature type="transmembrane region" description="Helical" evidence="2">
    <location>
        <begin position="11"/>
        <end position="31"/>
    </location>
</feature>
<feature type="topological domain" description="Extracellular" evidence="1">
    <location>
        <begin position="32"/>
        <end position="37"/>
    </location>
</feature>
<feature type="transmembrane region" description="Helical" evidence="2">
    <location>
        <begin position="38"/>
        <end position="58"/>
    </location>
</feature>
<feature type="topological domain" description="Cytoplasmic" evidence="1">
    <location>
        <begin position="59"/>
        <end position="71"/>
    </location>
</feature>
<feature type="transmembrane region" description="Helical" evidence="2">
    <location>
        <begin position="72"/>
        <end position="92"/>
    </location>
</feature>
<feature type="topological domain" description="Extracellular" evidence="1">
    <location>
        <begin position="93"/>
        <end position="116"/>
    </location>
</feature>
<feature type="transmembrane region" description="Helical" evidence="2">
    <location>
        <begin position="117"/>
        <end position="137"/>
    </location>
</feature>
<feature type="topological domain" description="Cytoplasmic" evidence="1">
    <location>
        <position position="138"/>
    </location>
</feature>
<feature type="transmembrane region" description="Helical" evidence="2">
    <location>
        <begin position="139"/>
        <end position="159"/>
    </location>
</feature>
<feature type="topological domain" description="Extracellular" evidence="1">
    <location>
        <begin position="160"/>
        <end position="163"/>
    </location>
</feature>
<feature type="transmembrane region" description="Helical" evidence="2">
    <location>
        <begin position="164"/>
        <end position="184"/>
    </location>
</feature>
<feature type="topological domain" description="Cytoplasmic" evidence="1">
    <location>
        <begin position="185"/>
        <end position="201"/>
    </location>
</feature>
<feature type="transmembrane region" description="Helical" evidence="2">
    <location>
        <begin position="202"/>
        <end position="222"/>
    </location>
</feature>
<feature type="topological domain" description="Extracellular" evidence="1 8">
    <location>
        <begin position="223"/>
        <end position="234"/>
    </location>
</feature>
<feature type="transmembrane region" description="Helical" evidence="2">
    <location>
        <begin position="235"/>
        <end position="255"/>
    </location>
</feature>
<feature type="topological domain" description="Cytoplasmic" evidence="1">
    <location>
        <begin position="256"/>
        <end position="270"/>
    </location>
</feature>
<feature type="transmembrane region" description="Helical" evidence="2">
    <location>
        <begin position="271"/>
        <end position="291"/>
    </location>
</feature>
<feature type="topological domain" description="Extracellular" evidence="1">
    <location>
        <begin position="292"/>
        <end position="298"/>
    </location>
</feature>
<feature type="transmembrane region" description="Helical" evidence="2">
    <location>
        <begin position="299"/>
        <end position="319"/>
    </location>
</feature>
<feature type="topological domain" description="Cytoplasmic" evidence="1">
    <location>
        <begin position="320"/>
        <end position="340"/>
    </location>
</feature>
<feature type="splice variant" id="VSP_023225" description="In isoform 3." evidence="7">
    <location>
        <begin position="158"/>
        <end position="185"/>
    </location>
</feature>
<feature type="splice variant" id="VSP_023226" description="In isoform 2." evidence="6">
    <original>IVSVQLSFMLLTFIFSTRNNSGFTPADTVAIIFCSTHKSLTLG</original>
    <variation>R</variation>
    <location>
        <begin position="241"/>
        <end position="283"/>
    </location>
</feature>
<feature type="sequence conflict" description="In Ref. 2; BAB27214." evidence="8" ref="2">
    <original>F</original>
    <variation>V</variation>
    <location>
        <position position="144"/>
    </location>
</feature>
<dbReference type="EMBL" id="AY825926">
    <property type="protein sequence ID" value="AAV80709.1"/>
    <property type="molecule type" value="mRNA"/>
</dbReference>
<dbReference type="EMBL" id="AY825928">
    <property type="protein sequence ID" value="AAV80711.1"/>
    <property type="molecule type" value="mRNA"/>
</dbReference>
<dbReference type="EMBL" id="AK010834">
    <property type="protein sequence ID" value="BAB27214.1"/>
    <property type="molecule type" value="mRNA"/>
</dbReference>
<dbReference type="EMBL" id="AK040517">
    <property type="protein sequence ID" value="BAC30613.1"/>
    <property type="status" value="ALT_SEQ"/>
    <property type="molecule type" value="mRNA"/>
</dbReference>
<dbReference type="EMBL" id="AK079901">
    <property type="protein sequence ID" value="BAC37779.1"/>
    <property type="molecule type" value="mRNA"/>
</dbReference>
<dbReference type="EMBL" id="AK152752">
    <property type="protein sequence ID" value="BAE31467.1"/>
    <property type="molecule type" value="mRNA"/>
</dbReference>
<dbReference type="EMBL" id="AK152849">
    <property type="protein sequence ID" value="BAE31542.1"/>
    <property type="molecule type" value="mRNA"/>
</dbReference>
<dbReference type="EMBL" id="BC116666">
    <property type="protein sequence ID" value="AAI16667.1"/>
    <property type="molecule type" value="mRNA"/>
</dbReference>
<dbReference type="EMBL" id="BC116717">
    <property type="protein sequence ID" value="AAI16718.1"/>
    <property type="molecule type" value="mRNA"/>
</dbReference>
<dbReference type="CCDS" id="CCDS40395.1">
    <molecule id="Q5PT53-1"/>
</dbReference>
<dbReference type="CCDS" id="CCDS85567.1">
    <molecule id="Q5PT53-2"/>
</dbReference>
<dbReference type="CCDS" id="CCDS85568.1">
    <molecule id="Q5PT53-3"/>
</dbReference>
<dbReference type="RefSeq" id="NP_001009981.1">
    <molecule id="Q5PT53-3"/>
    <property type="nucleotide sequence ID" value="NM_001009981.2"/>
</dbReference>
<dbReference type="RefSeq" id="NP_001269037.1">
    <molecule id="Q5PT53-2"/>
    <property type="nucleotide sequence ID" value="NM_001282108.1"/>
</dbReference>
<dbReference type="RefSeq" id="NP_084012.1">
    <molecule id="Q5PT53-1"/>
    <property type="nucleotide sequence ID" value="NM_029736.2"/>
</dbReference>
<dbReference type="SMR" id="Q5PT53"/>
<dbReference type="FunCoup" id="Q5PT53">
    <property type="interactions" value="2338"/>
</dbReference>
<dbReference type="STRING" id="10090.ENSMUSP00000034111"/>
<dbReference type="PaxDb" id="10090-ENSMUSP00000034111"/>
<dbReference type="ProteomicsDB" id="291914">
    <molecule id="Q5PT53-1"/>
</dbReference>
<dbReference type="ProteomicsDB" id="291915">
    <molecule id="Q5PT53-2"/>
</dbReference>
<dbReference type="ProteomicsDB" id="291916">
    <molecule id="Q5PT53-3"/>
</dbReference>
<dbReference type="Antibodypedia" id="27520">
    <property type="antibodies" value="91 antibodies from 21 providers"/>
</dbReference>
<dbReference type="DNASU" id="76775"/>
<dbReference type="Ensembl" id="ENSMUST00000034111.10">
    <molecule id="Q5PT53-1"/>
    <property type="protein sequence ID" value="ENSMUSP00000034111.9"/>
    <property type="gene ID" value="ENSMUSG00000031684.12"/>
</dbReference>
<dbReference type="Ensembl" id="ENSMUST00000209490.2">
    <molecule id="Q5PT53-2"/>
    <property type="protein sequence ID" value="ENSMUSP00000148199.2"/>
    <property type="gene ID" value="ENSMUSG00000031684.12"/>
</dbReference>
<dbReference type="Ensembl" id="ENSMUST00000209992.2">
    <molecule id="Q5PT53-3"/>
    <property type="protein sequence ID" value="ENSMUSP00000147659.2"/>
    <property type="gene ID" value="ENSMUSG00000031684.12"/>
</dbReference>
<dbReference type="Ensembl" id="ENSMUST00000211286.2">
    <molecule id="Q5PT53-1"/>
    <property type="protein sequence ID" value="ENSMUSP00000147724.2"/>
    <property type="gene ID" value="ENSMUSG00000031684.12"/>
</dbReference>
<dbReference type="GeneID" id="76775"/>
<dbReference type="KEGG" id="mmu:76775"/>
<dbReference type="UCSC" id="uc009mid.2">
    <molecule id="Q5PT53-1"/>
    <property type="organism name" value="mouse"/>
</dbReference>
<dbReference type="UCSC" id="uc012ggi.2">
    <molecule id="Q5PT53-3"/>
    <property type="organism name" value="mouse"/>
</dbReference>
<dbReference type="UCSC" id="uc012ggk.2">
    <molecule id="Q5PT53-2"/>
    <property type="organism name" value="mouse"/>
</dbReference>
<dbReference type="AGR" id="MGI:1924025"/>
<dbReference type="CTD" id="84068"/>
<dbReference type="MGI" id="MGI:1924025">
    <property type="gene designation" value="Slc10a7"/>
</dbReference>
<dbReference type="VEuPathDB" id="HostDB:ENSMUSG00000031684"/>
<dbReference type="eggNOG" id="KOG4821">
    <property type="taxonomic scope" value="Eukaryota"/>
</dbReference>
<dbReference type="GeneTree" id="ENSGT00390000011932"/>
<dbReference type="HOGENOM" id="CLU_039013_0_0_1"/>
<dbReference type="InParanoid" id="Q5PT53"/>
<dbReference type="OMA" id="LPIMIYH"/>
<dbReference type="OrthoDB" id="188035at2759"/>
<dbReference type="PhylomeDB" id="Q5PT53"/>
<dbReference type="TreeFam" id="TF329411"/>
<dbReference type="BioGRID-ORCS" id="76775">
    <property type="hits" value="4 hits in 79 CRISPR screens"/>
</dbReference>
<dbReference type="ChiTaRS" id="Slc10a7">
    <property type="organism name" value="mouse"/>
</dbReference>
<dbReference type="PRO" id="PR:Q5PT53"/>
<dbReference type="Proteomes" id="UP000000589">
    <property type="component" value="Chromosome 8"/>
</dbReference>
<dbReference type="RNAct" id="Q5PT53">
    <property type="molecule type" value="protein"/>
</dbReference>
<dbReference type="Bgee" id="ENSMUSG00000031684">
    <property type="expression patterns" value="Expressed in humerus cartilage element and 223 other cell types or tissues"/>
</dbReference>
<dbReference type="ExpressionAtlas" id="Q5PT53">
    <property type="expression patterns" value="baseline and differential"/>
</dbReference>
<dbReference type="GO" id="GO:0005783">
    <property type="term" value="C:endoplasmic reticulum"/>
    <property type="evidence" value="ECO:0000250"/>
    <property type="project" value="UniProtKB"/>
</dbReference>
<dbReference type="GO" id="GO:0005789">
    <property type="term" value="C:endoplasmic reticulum membrane"/>
    <property type="evidence" value="ECO:0007669"/>
    <property type="project" value="UniProtKB-SubCell"/>
</dbReference>
<dbReference type="GO" id="GO:0000139">
    <property type="term" value="C:Golgi membrane"/>
    <property type="evidence" value="ECO:0007669"/>
    <property type="project" value="UniProtKB-SubCell"/>
</dbReference>
<dbReference type="GO" id="GO:0005886">
    <property type="term" value="C:plasma membrane"/>
    <property type="evidence" value="ECO:0000250"/>
    <property type="project" value="UniProtKB"/>
</dbReference>
<dbReference type="GO" id="GO:0015125">
    <property type="term" value="F:bile acid transmembrane transporter activity"/>
    <property type="evidence" value="ECO:0000250"/>
    <property type="project" value="UniProtKB"/>
</dbReference>
<dbReference type="GO" id="GO:0015293">
    <property type="term" value="F:symporter activity"/>
    <property type="evidence" value="ECO:0007669"/>
    <property type="project" value="UniProtKB-KW"/>
</dbReference>
<dbReference type="GO" id="GO:0060348">
    <property type="term" value="P:bone development"/>
    <property type="evidence" value="ECO:0000315"/>
    <property type="project" value="UniProtKB"/>
</dbReference>
<dbReference type="GO" id="GO:0030210">
    <property type="term" value="P:heparin proteoglycan biosynthetic process"/>
    <property type="evidence" value="ECO:0000315"/>
    <property type="project" value="UniProtKB"/>
</dbReference>
<dbReference type="GO" id="GO:0006874">
    <property type="term" value="P:intracellular calcium ion homeostasis"/>
    <property type="evidence" value="ECO:0007669"/>
    <property type="project" value="Ensembl"/>
</dbReference>
<dbReference type="GO" id="GO:0006814">
    <property type="term" value="P:sodium ion transport"/>
    <property type="evidence" value="ECO:0007669"/>
    <property type="project" value="UniProtKB-KW"/>
</dbReference>
<dbReference type="FunFam" id="1.20.1530.20:FF:000008">
    <property type="entry name" value="Sodium/bile acid cotransporter"/>
    <property type="match status" value="1"/>
</dbReference>
<dbReference type="Gene3D" id="1.20.1530.20">
    <property type="match status" value="1"/>
</dbReference>
<dbReference type="InterPro" id="IPR038770">
    <property type="entry name" value="Na+/solute_symporter_sf"/>
</dbReference>
<dbReference type="InterPro" id="IPR016833">
    <property type="entry name" value="Put_Na-Bile_cotransptr"/>
</dbReference>
<dbReference type="PANTHER" id="PTHR18640:SF5">
    <property type="entry name" value="SODIUM_BILE ACID COTRANSPORTER 7"/>
    <property type="match status" value="1"/>
</dbReference>
<dbReference type="PANTHER" id="PTHR18640">
    <property type="entry name" value="SOLUTE CARRIER FAMILY 10 MEMBER 7"/>
    <property type="match status" value="1"/>
</dbReference>
<dbReference type="Pfam" id="PF13593">
    <property type="entry name" value="SBF_like"/>
    <property type="match status" value="1"/>
</dbReference>
<dbReference type="PIRSF" id="PIRSF026166">
    <property type="entry name" value="UCP026166"/>
    <property type="match status" value="1"/>
</dbReference>